<protein>
    <recommendedName>
        <fullName evidence="11">Transcriptional regulator RamR</fullName>
    </recommendedName>
    <alternativeName>
        <fullName evidence="9">HTH-type transcriptional regulator RamR</fullName>
    </alternativeName>
    <alternativeName>
        <fullName evidence="8">Local repressor of ramA</fullName>
    </alternativeName>
</protein>
<accession>Q8ZR43</accession>
<feature type="chain" id="PRO_0000459792" description="Transcriptional regulator RamR">
    <location>
        <begin position="1"/>
        <end position="193"/>
    </location>
</feature>
<feature type="domain" description="HTH tetR-type" evidence="2">
    <location>
        <begin position="7"/>
        <end position="66"/>
    </location>
</feature>
<feature type="DNA-binding region" description="H-T-H motif" evidence="2">
    <location>
        <begin position="29"/>
        <end position="48"/>
    </location>
</feature>
<feature type="mutagenesis site" description="In BN18/21; significantly decreases susceptibility to quinolones, and to various antibiotics. Complementation with the wild-type ramR gene increases susceptibility to quinolones, and to various antibiotics. In BN18/41; significantly decreases susceptibility to quinolones, and to various antibiotics. Complementation with the wild-type ramR gene increases susceptibility to quinolones, and to various antibiotics. In BN18/71; significantly decreases susceptibility to quinolones, and to various antibiotics; when associated with I-84. Complementation with the wild-type ramR gene increases susceptibility to quinolones, and to various antibiotics; when associated with I-84." evidence="3">
    <original>T</original>
    <variation>P</variation>
    <location>
        <position position="18"/>
    </location>
</feature>
<feature type="mutagenesis site" description="In BN9945; decreases susceptibility to quinolones, and to various antibiotics. Complementation with the wild-type ramR gene increases susceptibility to quinolones, and to various antibiotics." evidence="3">
    <original>Y</original>
    <variation>H</variation>
    <location>
        <position position="59"/>
    </location>
</feature>
<feature type="mutagenesis site" description="In BN18/71; significantly decreases susceptibility to quinolones, and to various antibiotics; when associated with P-18. Complementation with the wild-type ramR gene increases susceptibility to quinolones, and to various antibiotics; when associated with P-18." evidence="3">
    <original>M</original>
    <variation>I</variation>
    <location>
        <position position="84"/>
    </location>
</feature>
<feature type="mutagenesis site" description="In EV118; significant decrease in expression from the ramA promoter, by comparison with wild-type RamR, in SL1344 strain." evidence="5">
    <original>E</original>
    <variation>V</variation>
    <location>
        <position position="118"/>
    </location>
</feature>
<feature type="helix" evidence="22">
    <location>
        <begin position="9"/>
        <end position="24"/>
    </location>
</feature>
<feature type="helix" evidence="23">
    <location>
        <begin position="25"/>
        <end position="27"/>
    </location>
</feature>
<feature type="helix" evidence="22">
    <location>
        <begin position="30"/>
        <end position="36"/>
    </location>
</feature>
<feature type="strand" evidence="22">
    <location>
        <begin position="37"/>
        <end position="39"/>
    </location>
</feature>
<feature type="helix" evidence="22">
    <location>
        <begin position="41"/>
        <end position="47"/>
    </location>
</feature>
<feature type="strand" evidence="23">
    <location>
        <begin position="48"/>
        <end position="50"/>
    </location>
</feature>
<feature type="helix" evidence="22">
    <location>
        <begin position="51"/>
        <end position="73"/>
    </location>
</feature>
<feature type="helix" evidence="22">
    <location>
        <begin position="81"/>
        <end position="98"/>
    </location>
</feature>
<feature type="helix" evidence="22">
    <location>
        <begin position="100"/>
        <end position="110"/>
    </location>
</feature>
<feature type="helix" evidence="22">
    <location>
        <begin position="117"/>
        <end position="125"/>
    </location>
</feature>
<feature type="helix" evidence="22">
    <location>
        <begin position="128"/>
        <end position="130"/>
    </location>
</feature>
<feature type="strand" evidence="22">
    <location>
        <begin position="133"/>
        <end position="136"/>
    </location>
</feature>
<feature type="helix" evidence="23">
    <location>
        <begin position="140"/>
        <end position="143"/>
    </location>
</feature>
<feature type="helix" evidence="22">
    <location>
        <begin position="145"/>
        <end position="147"/>
    </location>
</feature>
<feature type="helix" evidence="22">
    <location>
        <begin position="148"/>
        <end position="168"/>
    </location>
</feature>
<feature type="helix" evidence="22">
    <location>
        <begin position="170"/>
        <end position="172"/>
    </location>
</feature>
<feature type="helix" evidence="22">
    <location>
        <begin position="173"/>
        <end position="188"/>
    </location>
</feature>
<name>HTHTR_SALTY</name>
<organism evidence="13">
    <name type="scientific">Salmonella typhimurium (strain LT2 / SGSC1412 / ATCC 700720)</name>
    <dbReference type="NCBI Taxonomy" id="99287"/>
    <lineage>
        <taxon>Bacteria</taxon>
        <taxon>Pseudomonadati</taxon>
        <taxon>Pseudomonadota</taxon>
        <taxon>Gammaproteobacteria</taxon>
        <taxon>Enterobacterales</taxon>
        <taxon>Enterobacteriaceae</taxon>
        <taxon>Salmonella</taxon>
    </lineage>
</organism>
<sequence length="193" mass="21917">MARPKSEDKKQALLEAATQAIAQSGIAASTAVIARNAGVAEGTLFRYFATKDELINTLYLHLKQDLCQSMIMELDRSITDAKMMTRFIWNSYISWGLNHPARHRAIRQLAVSEKLTKETEQRADDMFPELRDLCHRSVLMVFMSDEYRAFGDGLFLALAETTMDFAARDPARAGEYIALGFEAMWRALTREEQ</sequence>
<proteinExistence type="evidence at protein level"/>
<comment type="function">
    <text evidence="1 3 4 5 6 7">Transcriptional regulator (PubMed:18443112, PubMed:22948865, PubMed:23800819, PubMed:30655545). Represses the transcription of the transcriptional activator RamA and, thereby, leads to repression of the expression of the efflux pump subunits AcrA and AcrB, and TolC (PubMed:18443112, PubMed:22948865, PubMed:23800819, PubMed:30655545). Acts by binding directly to the promoter region of the ramA gene (PubMed:22123696, PubMed:22948865, PubMed:23800819). Promoter binding may be inhibited partially by the small regulatory RNA StyR3, perhaps thereby ensuring a basal level of expression of RamA.</text>
</comment>
<comment type="subunit">
    <text evidence="1 4 6 7">Homodimer (PubMed:22123696). May bind DNA either as a homodimer or as a pair of homodimers (PubMed:22123696). Various chemicals reduce DNA-binding in vitro, including bile acids, such as cholic and chenodeoxycholic acids, and antimicrobial drugs, such as berberine, crystal violet, dequalinium, ethidium bromide and rhodamine 6G (PubMed:23800819, PubMed:30655545). Binds small regulatory RNA StyR3.</text>
</comment>
<comment type="disruption phenotype">
    <text evidence="3 4 7">Deletion results in a multi-drug resistance phenotype in the DT104 strain S/921495, with fourfold decreases in susceptibility to nalidixic acid, flumequine, enrofloxacin, ciprofloxacin, chloramphenicol, florfenicol, and tetracycline (PubMed:18443112). Significant increases in expression of RamA, efflux pump subunits AcrA and AcrB, and TolC, in DT104 S/921495 and 14028s / SGSC 2262 strains (PubMed:18443112, PubMed:22123696, PubMed:30655545).</text>
</comment>
<comment type="miscellaneous">
    <text evidence="4 5 6 7">Binding of RamR to the promoter region of the ramA gene is significantly reduced as a result of deletions of various short sequences; deletion of two consecutive bases probably contributes to the multi-drug resistance phenotype of the BN10055 clinical isolate (PubMed:22123696, PubMed:22948865). RamR binds to various chemicals in vitro, including bile acids, such as cholic and chenodeoxycholic acids, and antimicrobial drugs, such as berberine, crystal violet, dequalinium, ethidium bromide and rhodamine 6G (PubMed:23800819, PubMed:30655545).</text>
</comment>
<gene>
    <name evidence="8" type="primary">ramR</name>
    <name evidence="12" type="ordered locus">STM0580</name>
</gene>
<keyword id="KW-0002">3D-structure</keyword>
<keyword id="KW-0238">DNA-binding</keyword>
<keyword id="KW-1185">Reference proteome</keyword>
<keyword id="KW-0678">Repressor</keyword>
<keyword id="KW-0694">RNA-binding</keyword>
<keyword id="KW-0804">Transcription</keyword>
<keyword id="KW-0805">Transcription regulation</keyword>
<evidence type="ECO:0000250" key="1">
    <source>
        <dbReference type="UniProtKB" id="A0A0H3GJQ8"/>
    </source>
</evidence>
<evidence type="ECO:0000255" key="2">
    <source>
        <dbReference type="PROSITE-ProRule" id="PRU00335"/>
    </source>
</evidence>
<evidence type="ECO:0000269" key="3">
    <source>
    </source>
</evidence>
<evidence type="ECO:0000269" key="4">
    <source>
    </source>
</evidence>
<evidence type="ECO:0000269" key="5">
    <source>
    </source>
</evidence>
<evidence type="ECO:0000269" key="6">
    <source>
    </source>
</evidence>
<evidence type="ECO:0000269" key="7">
    <source>
    </source>
</evidence>
<evidence type="ECO:0000303" key="8">
    <source>
    </source>
</evidence>
<evidence type="ECO:0000303" key="9">
    <source>
    </source>
</evidence>
<evidence type="ECO:0000305" key="10"/>
<evidence type="ECO:0000305" key="11">
    <source>
    </source>
</evidence>
<evidence type="ECO:0000312" key="12">
    <source>
        <dbReference type="EMBL" id="AAL19531.1"/>
    </source>
</evidence>
<evidence type="ECO:0000312" key="13">
    <source>
        <dbReference type="Proteomes" id="UP000001014"/>
    </source>
</evidence>
<evidence type="ECO:0007744" key="14">
    <source>
        <dbReference type="PDB" id="3VVX"/>
    </source>
</evidence>
<evidence type="ECO:0007744" key="15">
    <source>
        <dbReference type="PDB" id="3VVY"/>
    </source>
</evidence>
<evidence type="ECO:0007744" key="16">
    <source>
        <dbReference type="PDB" id="6IE8"/>
    </source>
</evidence>
<evidence type="ECO:0007744" key="17">
    <source>
        <dbReference type="PDB" id="6IE9"/>
    </source>
</evidence>
<evidence type="ECO:0007744" key="18">
    <source>
        <dbReference type="PDB" id="6KO7"/>
    </source>
</evidence>
<evidence type="ECO:0007744" key="19">
    <source>
        <dbReference type="PDB" id="6KO8"/>
    </source>
</evidence>
<evidence type="ECO:0007744" key="20">
    <source>
        <dbReference type="PDB" id="7N4Z"/>
    </source>
</evidence>
<evidence type="ECO:0007744" key="21">
    <source>
        <dbReference type="PDB" id="7N53"/>
    </source>
</evidence>
<evidence type="ECO:0007829" key="22">
    <source>
        <dbReference type="PDB" id="6KO8"/>
    </source>
</evidence>
<evidence type="ECO:0007829" key="23">
    <source>
        <dbReference type="PDB" id="7N53"/>
    </source>
</evidence>
<reference evidence="13" key="1">
    <citation type="journal article" date="2001" name="Nature">
        <title>Complete genome sequence of Salmonella enterica serovar Typhimurium LT2.</title>
        <authorList>
            <person name="McClelland M."/>
            <person name="Sanderson K.E."/>
            <person name="Spieth J."/>
            <person name="Clifton S.W."/>
            <person name="Latreille P."/>
            <person name="Courtney L."/>
            <person name="Porwollik S."/>
            <person name="Ali J."/>
            <person name="Dante M."/>
            <person name="Du F."/>
            <person name="Hou S."/>
            <person name="Layman D."/>
            <person name="Leonard S."/>
            <person name="Nguyen C."/>
            <person name="Scott K."/>
            <person name="Holmes A."/>
            <person name="Grewal N."/>
            <person name="Mulvaney E."/>
            <person name="Ryan E."/>
            <person name="Sun H."/>
            <person name="Florea L."/>
            <person name="Miller W."/>
            <person name="Stoneking T."/>
            <person name="Nhan M."/>
            <person name="Waterston R."/>
            <person name="Wilson R.K."/>
        </authorList>
    </citation>
    <scope>NUCLEOTIDE SEQUENCE [LARGE SCALE GENOMIC DNA]</scope>
    <source>
        <strain evidence="13">LT2 / SGSC1412 / ATCC 700720</strain>
    </source>
</reference>
<reference evidence="10" key="2">
    <citation type="journal article" date="2008" name="Antimicrob. Agents Chemother.">
        <title>ramR mutations involved in efflux-mediated multidrug resistance in Salmonella enterica serovar Typhimurium.</title>
        <authorList>
            <person name="Abouzeed Y.M."/>
            <person name="Baucheron S."/>
            <person name="Cloeckaert A."/>
        </authorList>
    </citation>
    <scope>FUNCTION</scope>
    <scope>DISRUPTION PHENOTYPE</scope>
    <scope>MUTAGENESIS OF THR-18; TYR-59 AND MET-84</scope>
    <source>
        <strain evidence="10">BN18</strain>
        <strain evidence="10">DT104 strain S/921495</strain>
    </source>
</reference>
<reference evidence="10" key="3">
    <citation type="journal article" date="2012" name="Antimicrob. Agents Chemother.">
        <title>Binding of the RamR repressor to wild-type and mutated promoters of the RamA gene involved in efflux-mediated multidrug resistance in Salmonella enterica serovar Typhimurium.</title>
        <authorList>
            <person name="Baucheron S."/>
            <person name="Coste F."/>
            <person name="Canepa S."/>
            <person name="Maurel M.C."/>
            <person name="Giraud E."/>
            <person name="Culard F."/>
            <person name="Castaing B."/>
            <person name="Roussel A."/>
            <person name="Cloeckaert A."/>
        </authorList>
    </citation>
    <scope>FUNCTION</scope>
    <scope>DISRUPTION PHENOTYPE</scope>
    <source>
        <strain evidence="10">14028s / SGSC 2262</strain>
        <strain evidence="10">BN10055</strain>
    </source>
</reference>
<reference evidence="10" key="4">
    <citation type="journal article" date="2012" name="Antimicrob. Agents Chemother.">
        <title>Regulation of RamA by RamR in Salmonella enterica serovar Typhimurium: isolation of a RamR superrepressor.</title>
        <authorList>
            <person name="Ricci V."/>
            <person name="Busby S.J."/>
            <person name="Piddock L.J."/>
        </authorList>
    </citation>
    <scope>FUNCTION</scope>
    <scope>MUTAGENESIS OF GLU-118</scope>
    <source>
        <strain evidence="10">SL1344</strain>
    </source>
</reference>
<reference evidence="14 15" key="5">
    <citation type="journal article" date="2013" name="Nat. Commun.">
        <title>The crystal structure of multidrug-resistance regulator RamR with multiple drugs.</title>
        <authorList>
            <person name="Yamasaki S."/>
            <person name="Nikaido E."/>
            <person name="Nakashima R."/>
            <person name="Sakurai K."/>
            <person name="Fujiwara D."/>
            <person name="Fujii I."/>
            <person name="Nishino K."/>
        </authorList>
    </citation>
    <scope>X-RAY CRYSTALLOGRAPHY (1.63 ANGSTROMS) OF 2-193</scope>
    <scope>FUNCTION</scope>
    <scope>SUBUNIT</scope>
</reference>
<reference evidence="18 19" key="6">
    <citation type="journal article" date="2019" name="Biochem. Biophys. Res. Commun.">
        <title>Development of a structure determination method using a multidrug-resistance regulator protein as a framework.</title>
        <authorList>
            <person name="Matsumoto T."/>
            <person name="Nakashima R."/>
            <person name="Yamano A."/>
            <person name="Nishino K."/>
        </authorList>
    </citation>
    <scope>X-RAY CRYSTALLOGRAPHY (1.55 ANGSTROMS) OF 2-193</scope>
</reference>
<reference evidence="16 17" key="7">
    <citation type="journal article" date="2019" name="Sci. Rep.">
        <title>Crystal structure of the multidrug resistance regulator RamR complexed with bile acids.</title>
        <authorList>
            <person name="Yamasaki S."/>
            <person name="Nakashima R."/>
            <person name="Sakurai K."/>
            <person name="Baucheron S."/>
            <person name="Giraud E."/>
            <person name="Doublet B."/>
            <person name="Cloeckaert A."/>
            <person name="Nishino K."/>
        </authorList>
    </citation>
    <scope>X-RAY CRYSTALLOGRAPHY (1.78 ANGSTROMS) OF 2-193</scope>
    <scope>FUNCTION</scope>
    <scope>SUBUNIT</scope>
    <scope>DISRUPTION PHENOTYPE</scope>
    <source>
        <strain evidence="10">14028s / SGSC 2262</strain>
    </source>
</reference>
<reference evidence="20 21" key="8">
    <citation type="journal article" date="2022" name="Nat. Chem. Biol.">
        <title>Using fungible biosensors to evolve improved alkaloid biosyntheses.</title>
        <authorList>
            <person name="d'Oelsnitz S."/>
            <person name="Kim W."/>
            <person name="Burkholder N.T."/>
            <person name="Javanmardi K."/>
            <person name="Thyer R."/>
            <person name="Zhang Y."/>
            <person name="Alper H.S."/>
            <person name="Ellington A.D."/>
        </authorList>
    </citation>
    <scope>X-RAY CRYSTALLOGRAPHY (1.60 ANGSTROMS)</scope>
</reference>
<dbReference type="EMBL" id="AE006468">
    <property type="protein sequence ID" value="AAL19531.1"/>
    <property type="molecule type" value="Genomic_DNA"/>
</dbReference>
<dbReference type="RefSeq" id="NP_459572.1">
    <property type="nucleotide sequence ID" value="NC_003197.2"/>
</dbReference>
<dbReference type="RefSeq" id="WP_000113609.1">
    <property type="nucleotide sequence ID" value="NC_003197.2"/>
</dbReference>
<dbReference type="PDB" id="3VVX">
    <property type="method" value="X-ray"/>
    <property type="resolution" value="2.05 A"/>
    <property type="chains" value="A/B=2-193"/>
</dbReference>
<dbReference type="PDB" id="3VVY">
    <property type="method" value="X-ray"/>
    <property type="resolution" value="1.63 A"/>
    <property type="chains" value="A/B/C/D=2-193"/>
</dbReference>
<dbReference type="PDB" id="3VVZ">
    <property type="method" value="X-ray"/>
    <property type="resolution" value="2.51 A"/>
    <property type="chains" value="A/B/C/D=2-193"/>
</dbReference>
<dbReference type="PDB" id="3VW0">
    <property type="method" value="X-ray"/>
    <property type="resolution" value="2.60 A"/>
    <property type="chains" value="A/B/C/D=2-193"/>
</dbReference>
<dbReference type="PDB" id="3VW1">
    <property type="method" value="X-ray"/>
    <property type="resolution" value="2.21 A"/>
    <property type="chains" value="A/B/C/D=2-193"/>
</dbReference>
<dbReference type="PDB" id="3VW2">
    <property type="method" value="X-ray"/>
    <property type="resolution" value="2.34 A"/>
    <property type="chains" value="A/B/C/D=2-193"/>
</dbReference>
<dbReference type="PDB" id="6IE8">
    <property type="method" value="X-ray"/>
    <property type="resolution" value="2.00 A"/>
    <property type="chains" value="A=2-193"/>
</dbReference>
<dbReference type="PDB" id="6IE9">
    <property type="method" value="X-ray"/>
    <property type="resolution" value="1.78 A"/>
    <property type="chains" value="A=2-193"/>
</dbReference>
<dbReference type="PDB" id="6KO7">
    <property type="method" value="X-ray"/>
    <property type="resolution" value="1.70 A"/>
    <property type="chains" value="A/B/C/D=2-193"/>
</dbReference>
<dbReference type="PDB" id="6KO8">
    <property type="method" value="X-ray"/>
    <property type="resolution" value="1.55 A"/>
    <property type="chains" value="A=2-193"/>
</dbReference>
<dbReference type="PDB" id="6KO9">
    <property type="method" value="X-ray"/>
    <property type="resolution" value="2.20 A"/>
    <property type="chains" value="A/B/C/D=2-193"/>
</dbReference>
<dbReference type="PDB" id="7N4Z">
    <property type="method" value="X-ray"/>
    <property type="resolution" value="2.21 A"/>
    <property type="chains" value="A/B/C/D=1-193"/>
</dbReference>
<dbReference type="PDB" id="7N53">
    <property type="method" value="X-ray"/>
    <property type="resolution" value="1.60 A"/>
    <property type="chains" value="A/B=1-193"/>
</dbReference>
<dbReference type="PDB" id="7N54">
    <property type="method" value="X-ray"/>
    <property type="resolution" value="2.00 A"/>
    <property type="chains" value="A/B/C/D=1-193"/>
</dbReference>
<dbReference type="PDB" id="9GTV">
    <property type="method" value="X-ray"/>
    <property type="resolution" value="2.78 A"/>
    <property type="chains" value="A/B/C/D=2-193"/>
</dbReference>
<dbReference type="PDBsum" id="3VVX"/>
<dbReference type="PDBsum" id="3VVY"/>
<dbReference type="PDBsum" id="3VVZ"/>
<dbReference type="PDBsum" id="3VW0"/>
<dbReference type="PDBsum" id="3VW1"/>
<dbReference type="PDBsum" id="3VW2"/>
<dbReference type="PDBsum" id="6IE8"/>
<dbReference type="PDBsum" id="6IE9"/>
<dbReference type="PDBsum" id="6KO7"/>
<dbReference type="PDBsum" id="6KO8"/>
<dbReference type="PDBsum" id="6KO9"/>
<dbReference type="PDBsum" id="7N4Z"/>
<dbReference type="PDBsum" id="7N53"/>
<dbReference type="PDBsum" id="7N54"/>
<dbReference type="PDBsum" id="9GTV"/>
<dbReference type="SMR" id="Q8ZR43"/>
<dbReference type="STRING" id="99287.STM0580"/>
<dbReference type="PaxDb" id="99287-STM0580"/>
<dbReference type="GeneID" id="1252100"/>
<dbReference type="KEGG" id="stm:STM0580"/>
<dbReference type="PATRIC" id="fig|99287.12.peg.612"/>
<dbReference type="HOGENOM" id="CLU_069356_12_9_6"/>
<dbReference type="OMA" id="NSYIDWG"/>
<dbReference type="PhylomeDB" id="Q8ZR43"/>
<dbReference type="BioCyc" id="SENT99287:STM0580-MONOMER"/>
<dbReference type="Proteomes" id="UP000001014">
    <property type="component" value="Chromosome"/>
</dbReference>
<dbReference type="GO" id="GO:0003677">
    <property type="term" value="F:DNA binding"/>
    <property type="evidence" value="ECO:0007669"/>
    <property type="project" value="UniProtKB-KW"/>
</dbReference>
<dbReference type="GO" id="GO:0003723">
    <property type="term" value="F:RNA binding"/>
    <property type="evidence" value="ECO:0007669"/>
    <property type="project" value="UniProtKB-KW"/>
</dbReference>
<dbReference type="Gene3D" id="1.10.357.10">
    <property type="entry name" value="Tetracycline Repressor, domain 2"/>
    <property type="match status" value="1"/>
</dbReference>
<dbReference type="InterPro" id="IPR023772">
    <property type="entry name" value="DNA-bd_HTH_TetR-type_CS"/>
</dbReference>
<dbReference type="InterPro" id="IPR009057">
    <property type="entry name" value="Homeodomain-like_sf"/>
</dbReference>
<dbReference type="InterPro" id="IPR050109">
    <property type="entry name" value="HTH-type_TetR-like_transc_reg"/>
</dbReference>
<dbReference type="InterPro" id="IPR001647">
    <property type="entry name" value="HTH_TetR"/>
</dbReference>
<dbReference type="PANTHER" id="PTHR30055">
    <property type="entry name" value="HTH-TYPE TRANSCRIPTIONAL REGULATOR RUTR"/>
    <property type="match status" value="1"/>
</dbReference>
<dbReference type="PANTHER" id="PTHR30055:SF222">
    <property type="entry name" value="REGULATORY PROTEIN"/>
    <property type="match status" value="1"/>
</dbReference>
<dbReference type="Pfam" id="PF00440">
    <property type="entry name" value="TetR_N"/>
    <property type="match status" value="1"/>
</dbReference>
<dbReference type="PRINTS" id="PR00455">
    <property type="entry name" value="HTHTETR"/>
</dbReference>
<dbReference type="SUPFAM" id="SSF46689">
    <property type="entry name" value="Homeodomain-like"/>
    <property type="match status" value="1"/>
</dbReference>
<dbReference type="PROSITE" id="PS01081">
    <property type="entry name" value="HTH_TETR_1"/>
    <property type="match status" value="1"/>
</dbReference>
<dbReference type="PROSITE" id="PS50977">
    <property type="entry name" value="HTH_TETR_2"/>
    <property type="match status" value="1"/>
</dbReference>